<reference key="1">
    <citation type="journal article" date="2002" name="Nature">
        <title>Comparison of the genomes of two Xanthomonas pathogens with differing host specificities.</title>
        <authorList>
            <person name="da Silva A.C.R."/>
            <person name="Ferro J.A."/>
            <person name="Reinach F.C."/>
            <person name="Farah C.S."/>
            <person name="Furlan L.R."/>
            <person name="Quaggio R.B."/>
            <person name="Monteiro-Vitorello C.B."/>
            <person name="Van Sluys M.A."/>
            <person name="Almeida N.F. Jr."/>
            <person name="Alves L.M.C."/>
            <person name="do Amaral A.M."/>
            <person name="Bertolini M.C."/>
            <person name="Camargo L.E.A."/>
            <person name="Camarotte G."/>
            <person name="Cannavan F."/>
            <person name="Cardozo J."/>
            <person name="Chambergo F."/>
            <person name="Ciapina L.P."/>
            <person name="Cicarelli R.M.B."/>
            <person name="Coutinho L.L."/>
            <person name="Cursino-Santos J.R."/>
            <person name="El-Dorry H."/>
            <person name="Faria J.B."/>
            <person name="Ferreira A.J.S."/>
            <person name="Ferreira R.C.C."/>
            <person name="Ferro M.I.T."/>
            <person name="Formighieri E.F."/>
            <person name="Franco M.C."/>
            <person name="Greggio C.C."/>
            <person name="Gruber A."/>
            <person name="Katsuyama A.M."/>
            <person name="Kishi L.T."/>
            <person name="Leite R.P."/>
            <person name="Lemos E.G.M."/>
            <person name="Lemos M.V.F."/>
            <person name="Locali E.C."/>
            <person name="Machado M.A."/>
            <person name="Madeira A.M.B.N."/>
            <person name="Martinez-Rossi N.M."/>
            <person name="Martins E.C."/>
            <person name="Meidanis J."/>
            <person name="Menck C.F.M."/>
            <person name="Miyaki C.Y."/>
            <person name="Moon D.H."/>
            <person name="Moreira L.M."/>
            <person name="Novo M.T.M."/>
            <person name="Okura V.K."/>
            <person name="Oliveira M.C."/>
            <person name="Oliveira V.R."/>
            <person name="Pereira H.A."/>
            <person name="Rossi A."/>
            <person name="Sena J.A.D."/>
            <person name="Silva C."/>
            <person name="de Souza R.F."/>
            <person name="Spinola L.A.F."/>
            <person name="Takita M.A."/>
            <person name="Tamura R.E."/>
            <person name="Teixeira E.C."/>
            <person name="Tezza R.I.D."/>
            <person name="Trindade dos Santos M."/>
            <person name="Truffi D."/>
            <person name="Tsai S.M."/>
            <person name="White F.F."/>
            <person name="Setubal J.C."/>
            <person name="Kitajima J.P."/>
        </authorList>
    </citation>
    <scope>NUCLEOTIDE SEQUENCE [LARGE SCALE GENOMIC DNA]</scope>
    <source>
        <strain>ATCC 33913 / DSM 3586 / NCPPB 528 / LMG 568 / P 25</strain>
    </source>
</reference>
<proteinExistence type="inferred from homology"/>
<comment type="catalytic activity">
    <reaction evidence="1">
        <text>5-dehydro-4-deoxy-D-glucarate + H(+) = 2,5-dioxopentanoate + CO2 + H2O</text>
        <dbReference type="Rhea" id="RHEA:24608"/>
        <dbReference type="ChEBI" id="CHEBI:15377"/>
        <dbReference type="ChEBI" id="CHEBI:15378"/>
        <dbReference type="ChEBI" id="CHEBI:16526"/>
        <dbReference type="ChEBI" id="CHEBI:42819"/>
        <dbReference type="ChEBI" id="CHEBI:58136"/>
        <dbReference type="EC" id="4.2.1.41"/>
    </reaction>
</comment>
<comment type="pathway">
    <text evidence="1">Carbohydrate acid metabolism; D-glucarate degradation; 2,5-dioxopentanoate from D-glucarate: step 2/2.</text>
</comment>
<comment type="similarity">
    <text evidence="1">Belongs to the DapA family.</text>
</comment>
<gene>
    <name type="ordered locus">XCC3245</name>
</gene>
<keyword id="KW-0456">Lyase</keyword>
<keyword id="KW-1185">Reference proteome</keyword>
<feature type="chain" id="PRO_0000103243" description="Probable 5-dehydro-4-deoxyglucarate dehydratase">
    <location>
        <begin position="1"/>
        <end position="305"/>
    </location>
</feature>
<sequence length="305" mass="32936">MSSRYTPSEMAQALGAGLLSFPVTHFDADMAFDEPAYRSNLDWLSSHPAAGLFAAGGTGELFSLTLDEVDRAVRAAVTQTAGRMPVIAPAGYGTAIAVAMAQAAERNDADGILLFPPYLTECDADGVAEHVERVCKATSLGVIVYGRANARLDDVALARVAERCPNLVGYKDGIGDVERMTRIYARLGDRLLYVGGLPTAETFALPYLEMGVTTYSSAIFNFLPEWALSFYAAVRARDHATIYRELNDFVLPYTVLRNRRAGYAVSIVKAGMRAVGRPAGPVRTPLADLTEDEFAQLTQLIGGRR</sequence>
<organism>
    <name type="scientific">Xanthomonas campestris pv. campestris (strain ATCC 33913 / DSM 3586 / NCPPB 528 / LMG 568 / P 25)</name>
    <dbReference type="NCBI Taxonomy" id="190485"/>
    <lineage>
        <taxon>Bacteria</taxon>
        <taxon>Pseudomonadati</taxon>
        <taxon>Pseudomonadota</taxon>
        <taxon>Gammaproteobacteria</taxon>
        <taxon>Lysobacterales</taxon>
        <taxon>Lysobacteraceae</taxon>
        <taxon>Xanthomonas</taxon>
    </lineage>
</organism>
<protein>
    <recommendedName>
        <fullName evidence="1">Probable 5-dehydro-4-deoxyglucarate dehydratase</fullName>
        <ecNumber evidence="1">4.2.1.41</ecNumber>
    </recommendedName>
    <alternativeName>
        <fullName evidence="1">5-keto-4-deoxy-glucarate dehydratase</fullName>
        <shortName evidence="1">KDGDH</shortName>
    </alternativeName>
</protein>
<evidence type="ECO:0000255" key="1">
    <source>
        <dbReference type="HAMAP-Rule" id="MF_00694"/>
    </source>
</evidence>
<dbReference type="EC" id="4.2.1.41" evidence="1"/>
<dbReference type="EMBL" id="AE008922">
    <property type="protein sequence ID" value="AAM42515.1"/>
    <property type="molecule type" value="Genomic_DNA"/>
</dbReference>
<dbReference type="RefSeq" id="NP_638591.1">
    <property type="nucleotide sequence ID" value="NC_003902.1"/>
</dbReference>
<dbReference type="SMR" id="Q8P5U0"/>
<dbReference type="STRING" id="190485.XCC3245"/>
<dbReference type="DNASU" id="999426"/>
<dbReference type="EnsemblBacteria" id="AAM42515">
    <property type="protein sequence ID" value="AAM42515"/>
    <property type="gene ID" value="XCC3245"/>
</dbReference>
<dbReference type="KEGG" id="xcc:XCC3245"/>
<dbReference type="PATRIC" id="fig|190485.4.peg.3467"/>
<dbReference type="eggNOG" id="COG0329">
    <property type="taxonomic scope" value="Bacteria"/>
</dbReference>
<dbReference type="HOGENOM" id="CLU_049343_5_2_6"/>
<dbReference type="OrthoDB" id="8995637at2"/>
<dbReference type="UniPathway" id="UPA00564">
    <property type="reaction ID" value="UER00628"/>
</dbReference>
<dbReference type="Proteomes" id="UP000001010">
    <property type="component" value="Chromosome"/>
</dbReference>
<dbReference type="GO" id="GO:0008840">
    <property type="term" value="F:4-hydroxy-tetrahydrodipicolinate synthase activity"/>
    <property type="evidence" value="ECO:0000318"/>
    <property type="project" value="GO_Central"/>
</dbReference>
<dbReference type="GO" id="GO:0047448">
    <property type="term" value="F:5-dehydro-4-deoxyglucarate dehydratase activity"/>
    <property type="evidence" value="ECO:0007669"/>
    <property type="project" value="UniProtKB-UniRule"/>
</dbReference>
<dbReference type="GO" id="GO:0042838">
    <property type="term" value="P:D-glucarate catabolic process"/>
    <property type="evidence" value="ECO:0007669"/>
    <property type="project" value="UniProtKB-UniRule"/>
</dbReference>
<dbReference type="CDD" id="cd00951">
    <property type="entry name" value="KDGDH"/>
    <property type="match status" value="1"/>
</dbReference>
<dbReference type="Gene3D" id="3.20.20.70">
    <property type="entry name" value="Aldolase class I"/>
    <property type="match status" value="1"/>
</dbReference>
<dbReference type="HAMAP" id="MF_00694">
    <property type="entry name" value="KDGDH"/>
    <property type="match status" value="1"/>
</dbReference>
<dbReference type="InterPro" id="IPR013785">
    <property type="entry name" value="Aldolase_TIM"/>
</dbReference>
<dbReference type="InterPro" id="IPR002220">
    <property type="entry name" value="DapA-like"/>
</dbReference>
<dbReference type="InterPro" id="IPR017655">
    <property type="entry name" value="Dehydro-deoxyglucarate_dehyd"/>
</dbReference>
<dbReference type="NCBIfam" id="TIGR03249">
    <property type="entry name" value="KdgD"/>
    <property type="match status" value="1"/>
</dbReference>
<dbReference type="NCBIfam" id="NF002958">
    <property type="entry name" value="PRK03620.1"/>
    <property type="match status" value="1"/>
</dbReference>
<dbReference type="PANTHER" id="PTHR12128:SF19">
    <property type="entry name" value="5-DEHYDRO-4-DEOXYGLUCARATE DEHYDRATASE 2-RELATED"/>
    <property type="match status" value="1"/>
</dbReference>
<dbReference type="PANTHER" id="PTHR12128">
    <property type="entry name" value="DIHYDRODIPICOLINATE SYNTHASE"/>
    <property type="match status" value="1"/>
</dbReference>
<dbReference type="Pfam" id="PF00701">
    <property type="entry name" value="DHDPS"/>
    <property type="match status" value="1"/>
</dbReference>
<dbReference type="PIRSF" id="PIRSF001365">
    <property type="entry name" value="DHDPS"/>
    <property type="match status" value="1"/>
</dbReference>
<dbReference type="SMART" id="SM01130">
    <property type="entry name" value="DHDPS"/>
    <property type="match status" value="1"/>
</dbReference>
<dbReference type="SUPFAM" id="SSF51569">
    <property type="entry name" value="Aldolase"/>
    <property type="match status" value="1"/>
</dbReference>
<accession>Q8P5U0</accession>
<name>KDGD_XANCP</name>